<dbReference type="EMBL" id="CP000644">
    <property type="protein sequence ID" value="ABO91154.1"/>
    <property type="molecule type" value="Genomic_DNA"/>
</dbReference>
<dbReference type="RefSeq" id="WP_005312073.1">
    <property type="nucleotide sequence ID" value="NC_009348.1"/>
</dbReference>
<dbReference type="SMR" id="A4SQI2"/>
<dbReference type="STRING" id="29491.GCA_000820065_03541"/>
<dbReference type="GeneID" id="79880884"/>
<dbReference type="KEGG" id="asa:ASA_3160"/>
<dbReference type="eggNOG" id="COG0052">
    <property type="taxonomic scope" value="Bacteria"/>
</dbReference>
<dbReference type="HOGENOM" id="CLU_040318_1_2_6"/>
<dbReference type="Proteomes" id="UP000000225">
    <property type="component" value="Chromosome"/>
</dbReference>
<dbReference type="GO" id="GO:0022627">
    <property type="term" value="C:cytosolic small ribosomal subunit"/>
    <property type="evidence" value="ECO:0007669"/>
    <property type="project" value="TreeGrafter"/>
</dbReference>
<dbReference type="GO" id="GO:0003735">
    <property type="term" value="F:structural constituent of ribosome"/>
    <property type="evidence" value="ECO:0007669"/>
    <property type="project" value="InterPro"/>
</dbReference>
<dbReference type="GO" id="GO:0006412">
    <property type="term" value="P:translation"/>
    <property type="evidence" value="ECO:0007669"/>
    <property type="project" value="UniProtKB-UniRule"/>
</dbReference>
<dbReference type="CDD" id="cd01425">
    <property type="entry name" value="RPS2"/>
    <property type="match status" value="1"/>
</dbReference>
<dbReference type="FunFam" id="1.10.287.610:FF:000001">
    <property type="entry name" value="30S ribosomal protein S2"/>
    <property type="match status" value="1"/>
</dbReference>
<dbReference type="Gene3D" id="3.40.50.10490">
    <property type="entry name" value="Glucose-6-phosphate isomerase like protein, domain 1"/>
    <property type="match status" value="1"/>
</dbReference>
<dbReference type="Gene3D" id="1.10.287.610">
    <property type="entry name" value="Helix hairpin bin"/>
    <property type="match status" value="1"/>
</dbReference>
<dbReference type="HAMAP" id="MF_00291_B">
    <property type="entry name" value="Ribosomal_uS2_B"/>
    <property type="match status" value="1"/>
</dbReference>
<dbReference type="InterPro" id="IPR001865">
    <property type="entry name" value="Ribosomal_uS2"/>
</dbReference>
<dbReference type="InterPro" id="IPR005706">
    <property type="entry name" value="Ribosomal_uS2_bac/mit/plastid"/>
</dbReference>
<dbReference type="InterPro" id="IPR018130">
    <property type="entry name" value="Ribosomal_uS2_CS"/>
</dbReference>
<dbReference type="InterPro" id="IPR023591">
    <property type="entry name" value="Ribosomal_uS2_flav_dom_sf"/>
</dbReference>
<dbReference type="NCBIfam" id="TIGR01011">
    <property type="entry name" value="rpsB_bact"/>
    <property type="match status" value="1"/>
</dbReference>
<dbReference type="PANTHER" id="PTHR12534">
    <property type="entry name" value="30S RIBOSOMAL PROTEIN S2 PROKARYOTIC AND ORGANELLAR"/>
    <property type="match status" value="1"/>
</dbReference>
<dbReference type="PANTHER" id="PTHR12534:SF0">
    <property type="entry name" value="SMALL RIBOSOMAL SUBUNIT PROTEIN US2M"/>
    <property type="match status" value="1"/>
</dbReference>
<dbReference type="Pfam" id="PF00318">
    <property type="entry name" value="Ribosomal_S2"/>
    <property type="match status" value="1"/>
</dbReference>
<dbReference type="PRINTS" id="PR00395">
    <property type="entry name" value="RIBOSOMALS2"/>
</dbReference>
<dbReference type="SUPFAM" id="SSF52313">
    <property type="entry name" value="Ribosomal protein S2"/>
    <property type="match status" value="1"/>
</dbReference>
<dbReference type="PROSITE" id="PS00962">
    <property type="entry name" value="RIBOSOMAL_S2_1"/>
    <property type="match status" value="1"/>
</dbReference>
<dbReference type="PROSITE" id="PS00963">
    <property type="entry name" value="RIBOSOMAL_S2_2"/>
    <property type="match status" value="1"/>
</dbReference>
<organism>
    <name type="scientific">Aeromonas salmonicida (strain A449)</name>
    <dbReference type="NCBI Taxonomy" id="382245"/>
    <lineage>
        <taxon>Bacteria</taxon>
        <taxon>Pseudomonadati</taxon>
        <taxon>Pseudomonadota</taxon>
        <taxon>Gammaproteobacteria</taxon>
        <taxon>Aeromonadales</taxon>
        <taxon>Aeromonadaceae</taxon>
        <taxon>Aeromonas</taxon>
    </lineage>
</organism>
<name>RS2_AERS4</name>
<evidence type="ECO:0000255" key="1">
    <source>
        <dbReference type="HAMAP-Rule" id="MF_00291"/>
    </source>
</evidence>
<evidence type="ECO:0000305" key="2"/>
<feature type="chain" id="PRO_1000003882" description="Small ribosomal subunit protein uS2">
    <location>
        <begin position="1"/>
        <end position="242"/>
    </location>
</feature>
<proteinExistence type="inferred from homology"/>
<keyword id="KW-0687">Ribonucleoprotein</keyword>
<keyword id="KW-0689">Ribosomal protein</keyword>
<gene>
    <name evidence="1" type="primary">rpsB</name>
    <name type="ordered locus">ASA_3160</name>
</gene>
<accession>A4SQI2</accession>
<sequence length="242" mass="26912">MAKVSMRDMLQAGVHFGHQTRYWNPKMKSYIFGARSKVHIINLEKTVPMFDDAMNFISSVAAKKGKVLFVGTKRAASEAVKDAAGRCDQFYVNHRWLGGMLTNWKTVRQSIKRLKDLETQSQDGTFEKLTKKEALMRTREMDKLEKSLGGIKNMGGLPDVLFVVDADHEHIAIKEANNLGIPVVSIVDTNSNPDGVDYVIPGNDDAIRAVQLYLNAAADTVLEARAQDIVVQAEQDGFVEAE</sequence>
<comment type="similarity">
    <text evidence="1">Belongs to the universal ribosomal protein uS2 family.</text>
</comment>
<protein>
    <recommendedName>
        <fullName evidence="1">Small ribosomal subunit protein uS2</fullName>
    </recommendedName>
    <alternativeName>
        <fullName evidence="2">30S ribosomal protein S2</fullName>
    </alternativeName>
</protein>
<reference key="1">
    <citation type="journal article" date="2008" name="BMC Genomics">
        <title>The genome of Aeromonas salmonicida subsp. salmonicida A449: insights into the evolution of a fish pathogen.</title>
        <authorList>
            <person name="Reith M.E."/>
            <person name="Singh R.K."/>
            <person name="Curtis B."/>
            <person name="Boyd J.M."/>
            <person name="Bouevitch A."/>
            <person name="Kimball J."/>
            <person name="Munholland J."/>
            <person name="Murphy C."/>
            <person name="Sarty D."/>
            <person name="Williams J."/>
            <person name="Nash J.H."/>
            <person name="Johnson S.C."/>
            <person name="Brown L.L."/>
        </authorList>
    </citation>
    <scope>NUCLEOTIDE SEQUENCE [LARGE SCALE GENOMIC DNA]</scope>
    <source>
        <strain>A449</strain>
    </source>
</reference>